<sequence>MSVPFDPASYDRQLEEKTVRLRELLAPFDAPEPQVFDSPREHYRLRAEFRLWREDQKRYYAMFAPGDNRTPILLEGLPIASERINALMPVLRERWEASPTLNHKLFQVDFLTTLAGDAMITMCYHRPLDAEWQAAAEQLAAELNVSLIGRSKGQKLIIGQDYVTEKLDVAGRTFSYRQPEGAFTQPNGTVNGKMLNWAFDALGERQDDLLELYCGNGNFTLPLATRVRKVLATEISKTSVNAALSNLDDNGVDNVTLVRLSAEELTEALNEVRPFRRLHGVDLKSYDFGSVFVDPPRAGMDPDTCELTRRFERILYISCNPETLAANIAQLHDTHRVERCALFDQFPYTHHMESGVLLVRR</sequence>
<protein>
    <recommendedName>
        <fullName evidence="1">tRNA/tmRNA (uracil-C(5))-methyltransferase</fullName>
        <ecNumber evidence="1">2.1.1.-</ecNumber>
        <ecNumber evidence="1">2.1.1.35</ecNumber>
    </recommendedName>
    <alternativeName>
        <fullName evidence="1">tRNA (uracil(54)-C(5))-methyltransferase</fullName>
    </alternativeName>
    <alternativeName>
        <fullName evidence="1">tRNA(m5U54)-methyltransferase</fullName>
        <shortName evidence="1">RUMT</shortName>
    </alternativeName>
    <alternativeName>
        <fullName evidence="1">tmRNA (uracil(341)-C(5))-methyltransferase</fullName>
    </alternativeName>
</protein>
<proteinExistence type="inferred from homology"/>
<reference key="1">
    <citation type="journal article" date="2005" name="J. Bacteriol.">
        <title>Whole-genome sequence analysis of Pseudomonas syringae pv. phaseolicola 1448A reveals divergence among pathovars in genes involved in virulence and transposition.</title>
        <authorList>
            <person name="Joardar V."/>
            <person name="Lindeberg M."/>
            <person name="Jackson R.W."/>
            <person name="Selengut J."/>
            <person name="Dodson R."/>
            <person name="Brinkac L.M."/>
            <person name="Daugherty S.C."/>
            <person name="DeBoy R.T."/>
            <person name="Durkin A.S."/>
            <person name="Gwinn Giglio M."/>
            <person name="Madupu R."/>
            <person name="Nelson W.C."/>
            <person name="Rosovitz M.J."/>
            <person name="Sullivan S.A."/>
            <person name="Crabtree J."/>
            <person name="Creasy T."/>
            <person name="Davidsen T.M."/>
            <person name="Haft D.H."/>
            <person name="Zafar N."/>
            <person name="Zhou L."/>
            <person name="Halpin R."/>
            <person name="Holley T."/>
            <person name="Khouri H.M."/>
            <person name="Feldblyum T.V."/>
            <person name="White O."/>
            <person name="Fraser C.M."/>
            <person name="Chatterjee A.K."/>
            <person name="Cartinhour S."/>
            <person name="Schneider D."/>
            <person name="Mansfield J.W."/>
            <person name="Collmer A."/>
            <person name="Buell R."/>
        </authorList>
    </citation>
    <scope>NUCLEOTIDE SEQUENCE [LARGE SCALE GENOMIC DNA]</scope>
    <source>
        <strain>1448A / Race 6</strain>
    </source>
</reference>
<comment type="function">
    <text evidence="1">Dual-specificity methyltransferase that catalyzes the formation of 5-methyluridine at position 54 (m5U54) in all tRNAs, and that of position 341 (m5U341) in tmRNA (transfer-mRNA).</text>
</comment>
<comment type="catalytic activity">
    <reaction evidence="1">
        <text>uridine(54) in tRNA + S-adenosyl-L-methionine = 5-methyluridine(54) in tRNA + S-adenosyl-L-homocysteine + H(+)</text>
        <dbReference type="Rhea" id="RHEA:42712"/>
        <dbReference type="Rhea" id="RHEA-COMP:10167"/>
        <dbReference type="Rhea" id="RHEA-COMP:10193"/>
        <dbReference type="ChEBI" id="CHEBI:15378"/>
        <dbReference type="ChEBI" id="CHEBI:57856"/>
        <dbReference type="ChEBI" id="CHEBI:59789"/>
        <dbReference type="ChEBI" id="CHEBI:65315"/>
        <dbReference type="ChEBI" id="CHEBI:74447"/>
        <dbReference type="EC" id="2.1.1.35"/>
    </reaction>
</comment>
<comment type="catalytic activity">
    <reaction evidence="1">
        <text>uridine(341) in tmRNA + S-adenosyl-L-methionine = 5-methyluridine(341) in tmRNA + S-adenosyl-L-homocysteine + H(+)</text>
        <dbReference type="Rhea" id="RHEA:43612"/>
        <dbReference type="Rhea" id="RHEA-COMP:10630"/>
        <dbReference type="Rhea" id="RHEA-COMP:10631"/>
        <dbReference type="ChEBI" id="CHEBI:15378"/>
        <dbReference type="ChEBI" id="CHEBI:57856"/>
        <dbReference type="ChEBI" id="CHEBI:59789"/>
        <dbReference type="ChEBI" id="CHEBI:65315"/>
        <dbReference type="ChEBI" id="CHEBI:74447"/>
    </reaction>
</comment>
<comment type="similarity">
    <text evidence="1">Belongs to the class I-like SAM-binding methyltransferase superfamily. RNA M5U methyltransferase family. TrmA subfamily.</text>
</comment>
<evidence type="ECO:0000255" key="1">
    <source>
        <dbReference type="HAMAP-Rule" id="MF_01011"/>
    </source>
</evidence>
<name>TRMA_PSE14</name>
<keyword id="KW-0489">Methyltransferase</keyword>
<keyword id="KW-0949">S-adenosyl-L-methionine</keyword>
<keyword id="KW-0808">Transferase</keyword>
<keyword id="KW-0819">tRNA processing</keyword>
<dbReference type="EC" id="2.1.1.-" evidence="1"/>
<dbReference type="EC" id="2.1.1.35" evidence="1"/>
<dbReference type="EMBL" id="CP000058">
    <property type="protein sequence ID" value="AAZ34609.1"/>
    <property type="molecule type" value="Genomic_DNA"/>
</dbReference>
<dbReference type="RefSeq" id="WP_004666256.1">
    <property type="nucleotide sequence ID" value="NC_005773.3"/>
</dbReference>
<dbReference type="SMR" id="Q48DT0"/>
<dbReference type="GeneID" id="69861356"/>
<dbReference type="KEGG" id="psp:PSPPH_4345"/>
<dbReference type="eggNOG" id="COG2265">
    <property type="taxonomic scope" value="Bacteria"/>
</dbReference>
<dbReference type="HOGENOM" id="CLU_043022_0_0_6"/>
<dbReference type="Proteomes" id="UP000000551">
    <property type="component" value="Chromosome"/>
</dbReference>
<dbReference type="GO" id="GO:0005829">
    <property type="term" value="C:cytosol"/>
    <property type="evidence" value="ECO:0007669"/>
    <property type="project" value="TreeGrafter"/>
</dbReference>
<dbReference type="GO" id="GO:0019843">
    <property type="term" value="F:rRNA binding"/>
    <property type="evidence" value="ECO:0007669"/>
    <property type="project" value="TreeGrafter"/>
</dbReference>
<dbReference type="GO" id="GO:0030697">
    <property type="term" value="F:tRNA (uracil(54)-C5)-methyltransferase activity, S-adenosyl methionine-dependent"/>
    <property type="evidence" value="ECO:0007669"/>
    <property type="project" value="UniProtKB-UniRule"/>
</dbReference>
<dbReference type="GO" id="GO:0000049">
    <property type="term" value="F:tRNA binding"/>
    <property type="evidence" value="ECO:0007669"/>
    <property type="project" value="TreeGrafter"/>
</dbReference>
<dbReference type="GO" id="GO:0030488">
    <property type="term" value="P:tRNA methylation"/>
    <property type="evidence" value="ECO:0007669"/>
    <property type="project" value="UniProtKB-UniRule"/>
</dbReference>
<dbReference type="CDD" id="cd02440">
    <property type="entry name" value="AdoMet_MTases"/>
    <property type="match status" value="1"/>
</dbReference>
<dbReference type="FunFam" id="2.40.50.1070:FF:000001">
    <property type="entry name" value="tRNA/tmRNA (uracil-C(5))-methyltransferase"/>
    <property type="match status" value="1"/>
</dbReference>
<dbReference type="FunFam" id="3.40.50.150:FF:000012">
    <property type="entry name" value="tRNA/tmRNA (uracil-C(5))-methyltransferase"/>
    <property type="match status" value="1"/>
</dbReference>
<dbReference type="Gene3D" id="2.40.50.1070">
    <property type="match status" value="1"/>
</dbReference>
<dbReference type="Gene3D" id="3.40.50.150">
    <property type="entry name" value="Vaccinia Virus protein VP39"/>
    <property type="match status" value="1"/>
</dbReference>
<dbReference type="HAMAP" id="MF_01011">
    <property type="entry name" value="RNA_methyltr_TrmA"/>
    <property type="match status" value="1"/>
</dbReference>
<dbReference type="InterPro" id="IPR030390">
    <property type="entry name" value="MeTrfase_TrmA_AS"/>
</dbReference>
<dbReference type="InterPro" id="IPR030391">
    <property type="entry name" value="MeTrfase_TrmA_CS"/>
</dbReference>
<dbReference type="InterPro" id="IPR029063">
    <property type="entry name" value="SAM-dependent_MTases_sf"/>
</dbReference>
<dbReference type="InterPro" id="IPR011869">
    <property type="entry name" value="TrmA_MeTrfase"/>
</dbReference>
<dbReference type="InterPro" id="IPR010280">
    <property type="entry name" value="U5_MeTrfase_fam"/>
</dbReference>
<dbReference type="NCBIfam" id="TIGR02143">
    <property type="entry name" value="trmA_only"/>
    <property type="match status" value="1"/>
</dbReference>
<dbReference type="PANTHER" id="PTHR47790">
    <property type="entry name" value="TRNA/TMRNA (URACIL-C(5))-METHYLTRANSFERASE"/>
    <property type="match status" value="1"/>
</dbReference>
<dbReference type="PANTHER" id="PTHR47790:SF2">
    <property type="entry name" value="TRNA_TMRNA (URACIL-C(5))-METHYLTRANSFERASE"/>
    <property type="match status" value="1"/>
</dbReference>
<dbReference type="Pfam" id="PF05958">
    <property type="entry name" value="tRNA_U5-meth_tr"/>
    <property type="match status" value="1"/>
</dbReference>
<dbReference type="SUPFAM" id="SSF53335">
    <property type="entry name" value="S-adenosyl-L-methionine-dependent methyltransferases"/>
    <property type="match status" value="1"/>
</dbReference>
<dbReference type="PROSITE" id="PS51687">
    <property type="entry name" value="SAM_MT_RNA_M5U"/>
    <property type="match status" value="1"/>
</dbReference>
<dbReference type="PROSITE" id="PS01230">
    <property type="entry name" value="TRMA_1"/>
    <property type="match status" value="1"/>
</dbReference>
<dbReference type="PROSITE" id="PS01231">
    <property type="entry name" value="TRMA_2"/>
    <property type="match status" value="1"/>
</dbReference>
<feature type="chain" id="PRO_0000281454" description="tRNA/tmRNA (uracil-C(5))-methyltransferase">
    <location>
        <begin position="1"/>
        <end position="361"/>
    </location>
</feature>
<feature type="active site" description="Nucleophile" evidence="1">
    <location>
        <position position="319"/>
    </location>
</feature>
<feature type="active site" description="Proton acceptor" evidence="1">
    <location>
        <position position="353"/>
    </location>
</feature>
<feature type="binding site" evidence="1">
    <location>
        <position position="185"/>
    </location>
    <ligand>
        <name>S-adenosyl-L-methionine</name>
        <dbReference type="ChEBI" id="CHEBI:59789"/>
    </ligand>
</feature>
<feature type="binding site" evidence="1">
    <location>
        <position position="213"/>
    </location>
    <ligand>
        <name>S-adenosyl-L-methionine</name>
        <dbReference type="ChEBI" id="CHEBI:59789"/>
    </ligand>
</feature>
<feature type="binding site" evidence="1">
    <location>
        <position position="218"/>
    </location>
    <ligand>
        <name>S-adenosyl-L-methionine</name>
        <dbReference type="ChEBI" id="CHEBI:59789"/>
    </ligand>
</feature>
<feature type="binding site" evidence="1">
    <location>
        <position position="234"/>
    </location>
    <ligand>
        <name>S-adenosyl-L-methionine</name>
        <dbReference type="ChEBI" id="CHEBI:59789"/>
    </ligand>
</feature>
<feature type="binding site" evidence="1">
    <location>
        <position position="294"/>
    </location>
    <ligand>
        <name>S-adenosyl-L-methionine</name>
        <dbReference type="ChEBI" id="CHEBI:59789"/>
    </ligand>
</feature>
<gene>
    <name evidence="1" type="primary">trmA</name>
    <name type="ordered locus">PSPPH_4345</name>
</gene>
<organism>
    <name type="scientific">Pseudomonas savastanoi pv. phaseolicola (strain 1448A / Race 6)</name>
    <name type="common">Pseudomonas syringae pv. phaseolicola (strain 1448A / Race 6)</name>
    <dbReference type="NCBI Taxonomy" id="264730"/>
    <lineage>
        <taxon>Bacteria</taxon>
        <taxon>Pseudomonadati</taxon>
        <taxon>Pseudomonadota</taxon>
        <taxon>Gammaproteobacteria</taxon>
        <taxon>Pseudomonadales</taxon>
        <taxon>Pseudomonadaceae</taxon>
        <taxon>Pseudomonas</taxon>
    </lineage>
</organism>
<accession>Q48DT0</accession>